<evidence type="ECO:0000250" key="1">
    <source>
        <dbReference type="UniProtKB" id="P34760"/>
    </source>
</evidence>
<evidence type="ECO:0000255" key="2">
    <source>
        <dbReference type="PROSITE-ProRule" id="PRU00691"/>
    </source>
</evidence>
<evidence type="ECO:0000256" key="3">
    <source>
        <dbReference type="SAM" id="MobiDB-lite"/>
    </source>
</evidence>
<evidence type="ECO:0000269" key="4">
    <source>
    </source>
</evidence>
<evidence type="ECO:0000269" key="5">
    <source>
    </source>
</evidence>
<evidence type="ECO:0000303" key="6">
    <source>
    </source>
</evidence>
<evidence type="ECO:0000305" key="7"/>
<dbReference type="EC" id="1.11.1.24" evidence="1"/>
<dbReference type="EMBL" id="CP017625">
    <property type="protein sequence ID" value="AOW28640.1"/>
    <property type="molecule type" value="Genomic_DNA"/>
</dbReference>
<dbReference type="RefSeq" id="XP_019330878.1">
    <property type="nucleotide sequence ID" value="XM_019475333.1"/>
</dbReference>
<dbReference type="SMR" id="P0CU34"/>
<dbReference type="FunCoup" id="P0CU34">
    <property type="interactions" value="1174"/>
</dbReference>
<dbReference type="STRING" id="237561.P0CU34"/>
<dbReference type="EnsemblFungi" id="C3_06180C_A-T">
    <property type="protein sequence ID" value="C3_06180C_A-T-p1"/>
    <property type="gene ID" value="C3_06180C_A"/>
</dbReference>
<dbReference type="EnsemblFungi" id="C3_06330W_A-T">
    <property type="protein sequence ID" value="C3_06330W_A-T-p1"/>
    <property type="gene ID" value="C3_06330W_A"/>
</dbReference>
<dbReference type="GeneID" id="30515214"/>
<dbReference type="KEGG" id="cal:CAALFM_C306180CA"/>
<dbReference type="KEGG" id="cal:CAALFM_C306330WA"/>
<dbReference type="VEuPathDB" id="FungiDB:C3_06180C_A"/>
<dbReference type="VEuPathDB" id="FungiDB:C3_06330W_A"/>
<dbReference type="eggNOG" id="KOG0852">
    <property type="taxonomic scope" value="Eukaryota"/>
</dbReference>
<dbReference type="InParanoid" id="P0CU34"/>
<dbReference type="OMA" id="FWYPKDF"/>
<dbReference type="OrthoDB" id="185659at2759"/>
<dbReference type="Proteomes" id="UP000000559">
    <property type="component" value="Chromosome 3"/>
</dbReference>
<dbReference type="GO" id="GO:0009986">
    <property type="term" value="C:cell surface"/>
    <property type="evidence" value="ECO:0007669"/>
    <property type="project" value="UniProtKB-SubCell"/>
</dbReference>
<dbReference type="GO" id="GO:0005829">
    <property type="term" value="C:cytosol"/>
    <property type="evidence" value="ECO:0000318"/>
    <property type="project" value="GO_Central"/>
</dbReference>
<dbReference type="GO" id="GO:0005634">
    <property type="term" value="C:nucleus"/>
    <property type="evidence" value="ECO:0007669"/>
    <property type="project" value="UniProtKB-SubCell"/>
</dbReference>
<dbReference type="GO" id="GO:0008379">
    <property type="term" value="F:thioredoxin peroxidase activity"/>
    <property type="evidence" value="ECO:0000318"/>
    <property type="project" value="GO_Central"/>
</dbReference>
<dbReference type="GO" id="GO:0045454">
    <property type="term" value="P:cell redox homeostasis"/>
    <property type="evidence" value="ECO:0000318"/>
    <property type="project" value="GO_Central"/>
</dbReference>
<dbReference type="GO" id="GO:0042744">
    <property type="term" value="P:hydrogen peroxide catabolic process"/>
    <property type="evidence" value="ECO:0000318"/>
    <property type="project" value="GO_Central"/>
</dbReference>
<dbReference type="GO" id="GO:0006979">
    <property type="term" value="P:response to oxidative stress"/>
    <property type="evidence" value="ECO:0000318"/>
    <property type="project" value="GO_Central"/>
</dbReference>
<dbReference type="CDD" id="cd03015">
    <property type="entry name" value="PRX_Typ2cys"/>
    <property type="match status" value="1"/>
</dbReference>
<dbReference type="FunFam" id="3.40.30.10:FF:000003">
    <property type="entry name" value="Peroxiredoxin 1"/>
    <property type="match status" value="1"/>
</dbReference>
<dbReference type="Gene3D" id="3.40.30.10">
    <property type="entry name" value="Glutaredoxin"/>
    <property type="match status" value="1"/>
</dbReference>
<dbReference type="InterPro" id="IPR000866">
    <property type="entry name" value="AhpC/TSA"/>
</dbReference>
<dbReference type="InterPro" id="IPR050217">
    <property type="entry name" value="Peroxiredoxin"/>
</dbReference>
<dbReference type="InterPro" id="IPR024706">
    <property type="entry name" value="Peroxiredoxin_AhpC-typ"/>
</dbReference>
<dbReference type="InterPro" id="IPR019479">
    <property type="entry name" value="Peroxiredoxin_C"/>
</dbReference>
<dbReference type="InterPro" id="IPR036249">
    <property type="entry name" value="Thioredoxin-like_sf"/>
</dbReference>
<dbReference type="InterPro" id="IPR013766">
    <property type="entry name" value="Thioredoxin_domain"/>
</dbReference>
<dbReference type="PANTHER" id="PTHR10681:SF171">
    <property type="entry name" value="PEROXIREDOXIN 4"/>
    <property type="match status" value="1"/>
</dbReference>
<dbReference type="PANTHER" id="PTHR10681">
    <property type="entry name" value="THIOREDOXIN PEROXIDASE"/>
    <property type="match status" value="1"/>
</dbReference>
<dbReference type="Pfam" id="PF10417">
    <property type="entry name" value="1-cysPrx_C"/>
    <property type="match status" value="1"/>
</dbReference>
<dbReference type="Pfam" id="PF00578">
    <property type="entry name" value="AhpC-TSA"/>
    <property type="match status" value="1"/>
</dbReference>
<dbReference type="PIRSF" id="PIRSF000239">
    <property type="entry name" value="AHPC"/>
    <property type="match status" value="1"/>
</dbReference>
<dbReference type="SUPFAM" id="SSF52833">
    <property type="entry name" value="Thioredoxin-like"/>
    <property type="match status" value="1"/>
</dbReference>
<dbReference type="PROSITE" id="PS51352">
    <property type="entry name" value="THIOREDOXIN_2"/>
    <property type="match status" value="1"/>
</dbReference>
<comment type="function">
    <text evidence="4">Thiol-specific peroxidase that catalyzes the reduction of hydrogen peroxide and organic hydroperoxides to water and alcohols, respectively. Plays a role in cell protection against oxidative stress by detoxifying peroxides and as sensor of hydrogen peroxide-mediated signaling events. Also involved in the correct composition of the hyphal cell wall.</text>
</comment>
<comment type="catalytic activity">
    <reaction evidence="1">
        <text>a hydroperoxide + [thioredoxin]-dithiol = an alcohol + [thioredoxin]-disulfide + H2O</text>
        <dbReference type="Rhea" id="RHEA:62620"/>
        <dbReference type="Rhea" id="RHEA-COMP:10698"/>
        <dbReference type="Rhea" id="RHEA-COMP:10700"/>
        <dbReference type="ChEBI" id="CHEBI:15377"/>
        <dbReference type="ChEBI" id="CHEBI:29950"/>
        <dbReference type="ChEBI" id="CHEBI:30879"/>
        <dbReference type="ChEBI" id="CHEBI:35924"/>
        <dbReference type="ChEBI" id="CHEBI:50058"/>
        <dbReference type="EC" id="1.11.1.24"/>
    </reaction>
</comment>
<comment type="subunit">
    <text evidence="1">Homodimer; disulfide-linked, upon oxidation.</text>
</comment>
<comment type="subcellular location">
    <subcellularLocation>
        <location evidence="4">Cell surface</location>
    </subcellularLocation>
    <subcellularLocation>
        <location evidence="5">Nucleus</location>
    </subcellularLocation>
    <subcellularLocation>
        <location evidence="5">Cytoplasm</location>
    </subcellularLocation>
    <text evidence="4">Localizes to the cell surface in hyphally grown cells, whereas no surface but mainly nuclear localization is found in yeast-form cells.</text>
</comment>
<comment type="induction">
    <text evidence="4">Induced by oxidative stress.</text>
</comment>
<comment type="disruption phenotype">
    <text evidence="4">Results in delayed hyphal development and enhanced sensitivity to cell wall-perturbing agents, yet does not impair virulence in vivo.</text>
</comment>
<comment type="miscellaneous">
    <text evidence="1">The active site is a conserved redox-active cysteine residue, the peroxidatic cysteine (C(P)), which makes the nucleophilic attack on the peroxide substrate. The peroxide oxidizes the C(P)-SH to cysteine sulfenic acid (C(P)-SOH), which then reacts with another cysteine residue, the resolving cysteine (C(R)), to form a disulfide bridge. The disulfide is subsequently reduced by an appropriate electron donor to complete the catalytic cycle. In this typical 2-Cys peroxiredoxin, C(R) is provided by the other dimeric subunit to form an intersubunit disulfide. The disulfide is subsequently reduced by thioredoxin.</text>
</comment>
<comment type="similarity">
    <text evidence="7">Belongs to the peroxiredoxin family. AhpC/Prx1 subfamily.</text>
</comment>
<gene>
    <name evidence="6" type="primary">TSA1B</name>
    <name type="ordered locus">CAALFM_C306330WA</name>
    <name type="ORF">orf19.7398.1</name>
</gene>
<keyword id="KW-0049">Antioxidant</keyword>
<keyword id="KW-0963">Cytoplasm</keyword>
<keyword id="KW-1015">Disulfide bond</keyword>
<keyword id="KW-0539">Nucleus</keyword>
<keyword id="KW-0560">Oxidoreductase</keyword>
<keyword id="KW-0575">Peroxidase</keyword>
<keyword id="KW-0676">Redox-active center</keyword>
<keyword id="KW-1185">Reference proteome</keyword>
<protein>
    <recommendedName>
        <fullName>Peroxiredoxin TSA1-B</fullName>
        <ecNumber evidence="1">1.11.1.24</ecNumber>
    </recommendedName>
    <alternativeName>
        <fullName>Thiol-specific antioxidant protein</fullName>
    </alternativeName>
    <alternativeName>
        <fullName>Thioredoxin peroxidase</fullName>
    </alternativeName>
    <alternativeName>
        <fullName evidence="7">Thioredoxin-dependent peroxiredoxin TSA1-B</fullName>
    </alternativeName>
</protein>
<feature type="chain" id="PRO_0000439054" description="Peroxiredoxin TSA1-B">
    <location>
        <begin position="1"/>
        <end position="196"/>
    </location>
</feature>
<feature type="domain" description="Thioredoxin" evidence="2">
    <location>
        <begin position="3"/>
        <end position="161"/>
    </location>
</feature>
<feature type="region of interest" description="Disordered" evidence="3">
    <location>
        <begin position="173"/>
        <end position="196"/>
    </location>
</feature>
<feature type="compositionally biased region" description="Basic and acidic residues" evidence="3">
    <location>
        <begin position="175"/>
        <end position="196"/>
    </location>
</feature>
<feature type="active site" description="Cysteine sulfenic acid (-SOH) intermediate" evidence="1">
    <location>
        <position position="48"/>
    </location>
</feature>
<feature type="binding site" evidence="1">
    <location>
        <begin position="45"/>
        <end position="47"/>
    </location>
    <ligand>
        <name>substrate</name>
    </ligand>
</feature>
<feature type="binding site" evidence="1">
    <location>
        <position position="124"/>
    </location>
    <ligand>
        <name>substrate</name>
    </ligand>
</feature>
<feature type="disulfide bond" description="Interchain (with C-169); in linked form" evidence="1">
    <location>
        <position position="48"/>
    </location>
</feature>
<feature type="disulfide bond" description="Interchain (with C-48); in linked form" evidence="1">
    <location>
        <position position="169"/>
    </location>
</feature>
<name>TSA1B_CANAL</name>
<proteinExistence type="evidence at transcript level"/>
<organism>
    <name type="scientific">Candida albicans (strain SC5314 / ATCC MYA-2876)</name>
    <name type="common">Yeast</name>
    <dbReference type="NCBI Taxonomy" id="237561"/>
    <lineage>
        <taxon>Eukaryota</taxon>
        <taxon>Fungi</taxon>
        <taxon>Dikarya</taxon>
        <taxon>Ascomycota</taxon>
        <taxon>Saccharomycotina</taxon>
        <taxon>Pichiomycetes</taxon>
        <taxon>Debaryomycetaceae</taxon>
        <taxon>Candida/Lodderomyces clade</taxon>
        <taxon>Candida</taxon>
    </lineage>
</organism>
<reference key="1">
    <citation type="journal article" date="2004" name="Proc. Natl. Acad. Sci. U.S.A.">
        <title>The diploid genome sequence of Candida albicans.</title>
        <authorList>
            <person name="Jones T."/>
            <person name="Federspiel N.A."/>
            <person name="Chibana H."/>
            <person name="Dungan J."/>
            <person name="Kalman S."/>
            <person name="Magee B.B."/>
            <person name="Newport G."/>
            <person name="Thorstenson Y.R."/>
            <person name="Agabian N."/>
            <person name="Magee P.T."/>
            <person name="Davis R.W."/>
            <person name="Scherer S."/>
        </authorList>
    </citation>
    <scope>NUCLEOTIDE SEQUENCE [LARGE SCALE GENOMIC DNA]</scope>
    <source>
        <strain>SC5314 / ATCC MYA-2876</strain>
    </source>
</reference>
<reference key="2">
    <citation type="journal article" date="2007" name="Genome Biol.">
        <title>Assembly of the Candida albicans genome into sixteen supercontigs aligned on the eight chromosomes.</title>
        <authorList>
            <person name="van het Hoog M."/>
            <person name="Rast T.J."/>
            <person name="Martchenko M."/>
            <person name="Grindle S."/>
            <person name="Dignard D."/>
            <person name="Hogues H."/>
            <person name="Cuomo C."/>
            <person name="Berriman M."/>
            <person name="Scherer S."/>
            <person name="Magee B.B."/>
            <person name="Whiteway M."/>
            <person name="Chibana H."/>
            <person name="Nantel A."/>
            <person name="Magee P.T."/>
        </authorList>
    </citation>
    <scope>GENOME REANNOTATION</scope>
    <source>
        <strain>SC5314 / ATCC MYA-2876</strain>
    </source>
</reference>
<reference key="3">
    <citation type="journal article" date="2013" name="Genome Biol.">
        <title>Assembly of a phased diploid Candida albicans genome facilitates allele-specific measurements and provides a simple model for repeat and indel structure.</title>
        <authorList>
            <person name="Muzzey D."/>
            <person name="Schwartz K."/>
            <person name="Weissman J.S."/>
            <person name="Sherlock G."/>
        </authorList>
    </citation>
    <scope>NUCLEOTIDE SEQUENCE [LARGE SCALE GENOMIC DNA]</scope>
    <scope>GENOME REANNOTATION</scope>
    <source>
        <strain>SC5314 / ATCC MYA-2876</strain>
    </source>
</reference>
<reference key="4">
    <citation type="journal article" date="2005" name="Mol. Microbiol.">
        <title>The moonlighting protein Tsa1p is implicated in oxidative stress response and in cell wall biogenesis in Candida albicans.</title>
        <authorList>
            <person name="Urban C."/>
            <person name="Xiong X."/>
            <person name="Sohn K."/>
            <person name="Schroppel K."/>
            <person name="Brunner H."/>
            <person name="Rupp S."/>
        </authorList>
    </citation>
    <scope>FUNCTION</scope>
    <scope>INDUCTION</scope>
    <scope>DISRUPTION PHENOTYPE</scope>
    <scope>SUBCELLULAR LOCATION</scope>
</reference>
<reference key="5">
    <citation type="journal article" date="2005" name="Yeast">
        <title>Characterization of thiol-specific antioxidant 1 (TSA1) of Candida albicans.</title>
        <authorList>
            <person name="Shin D.H."/>
            <person name="Jung S."/>
            <person name="Park S.J."/>
            <person name="Kim Y.J."/>
            <person name="Ahn J.M."/>
            <person name="Kim W."/>
            <person name="Choi W."/>
        </authorList>
    </citation>
    <scope>SUBCELLULAR LOCATION</scope>
</reference>
<accession>P0CU34</accession>
<accession>A0A1D8PKI8</accession>
<sequence length="196" mass="21860">MAPVVQQPAPSFKKTAVVDGVFEEVTLEQYKGKWVLLAFIPLAFTFVCPSEIIAYSEAVKKFAEKDAQVLFASTDSEYTWLAWTNVARKDGGIGKVDFPVLADTNHSLSRDYGVLIEEEGVALRGIFLIDPKGVLRQITINDLPVGRSVEESLRLLEAFQFTEKYGEVCPANWHPGDETIKPSPEASKEYFNKVNK</sequence>